<comment type="function">
    <text evidence="1">Specifically catalyzes the cleavage of the D-lactyl ether substituent of MurNAc 6-phosphate, producing GlcNAc 6-phosphate and D-lactate.</text>
</comment>
<comment type="catalytic activity">
    <reaction evidence="1">
        <text>N-acetyl-D-muramate 6-phosphate + H2O = N-acetyl-D-glucosamine 6-phosphate + (R)-lactate</text>
        <dbReference type="Rhea" id="RHEA:26410"/>
        <dbReference type="ChEBI" id="CHEBI:15377"/>
        <dbReference type="ChEBI" id="CHEBI:16004"/>
        <dbReference type="ChEBI" id="CHEBI:57513"/>
        <dbReference type="ChEBI" id="CHEBI:58722"/>
        <dbReference type="EC" id="4.2.1.126"/>
    </reaction>
</comment>
<comment type="pathway">
    <text evidence="1">Amino-sugar metabolism; N-acetylmuramate degradation.</text>
</comment>
<comment type="subunit">
    <text evidence="1">Homodimer.</text>
</comment>
<comment type="miscellaneous">
    <text evidence="1">A lyase-type mechanism (elimination/hydration) is suggested for the cleavage of the lactyl ether bond of MurNAc 6-phosphate, with the formation of an alpha,beta-unsaturated aldehyde intermediate with (E)-stereochemistry, followed by the syn addition of water to give product.</text>
</comment>
<comment type="similarity">
    <text evidence="1">Belongs to the GCKR-like family. MurNAc-6-P etherase subfamily.</text>
</comment>
<reference key="1">
    <citation type="journal article" date="2007" name="PLoS ONE">
        <title>Molecular correlates of host specialization in Staphylococcus aureus.</title>
        <authorList>
            <person name="Herron-Olson L."/>
            <person name="Fitzgerald J.R."/>
            <person name="Musser J.M."/>
            <person name="Kapur V."/>
        </authorList>
    </citation>
    <scope>NUCLEOTIDE SEQUENCE [LARGE SCALE GENOMIC DNA]</scope>
    <source>
        <strain>bovine RF122 / ET3-1</strain>
    </source>
</reference>
<sequence>MMENSTTEARNEATMHLDEMTVEEALITMNKEDQQVPLAVQKAIPQLTKVIKKTIAQYKKGGRLIYIGAGTSGRLGVLDAAECVPTFNTDPHEIIGIIAGGQHAMTMAVEGAEDHKKLAEEDLKNIDLTSKDVVIGIAASGKTPYVIGGLTFANTIGATTVSISCNEHAVISEIAQYPVEVKVGPEVLTGSTRLKSGTAQKLILNMISTITMVGVGKVYDNLMIDVKATNQKLIDRSVRIIQEICAITYDEAMALYQVSEHDVKVATVMGMCGISKEEATRRLLNNGDIVKRAIRDRQP</sequence>
<accession>Q2YUY9</accession>
<name>MURQ_STAAB</name>
<proteinExistence type="inferred from homology"/>
<protein>
    <recommendedName>
        <fullName evidence="1">N-acetylmuramic acid 6-phosphate etherase</fullName>
        <shortName evidence="1">MurNAc-6-P etherase</shortName>
        <ecNumber evidence="1">4.2.1.126</ecNumber>
    </recommendedName>
    <alternativeName>
        <fullName evidence="1">N-acetylmuramic acid 6-phosphate hydrolase</fullName>
    </alternativeName>
    <alternativeName>
        <fullName evidence="1">N-acetylmuramic acid 6-phosphate lyase</fullName>
    </alternativeName>
</protein>
<keyword id="KW-0119">Carbohydrate metabolism</keyword>
<keyword id="KW-0456">Lyase</keyword>
<feature type="chain" id="PRO_0000249653" description="N-acetylmuramic acid 6-phosphate etherase">
    <location>
        <begin position="1"/>
        <end position="299"/>
    </location>
</feature>
<feature type="domain" description="SIS" evidence="1">
    <location>
        <begin position="54"/>
        <end position="217"/>
    </location>
</feature>
<feature type="active site" description="Proton donor" evidence="1">
    <location>
        <position position="82"/>
    </location>
</feature>
<feature type="active site" evidence="1">
    <location>
        <position position="113"/>
    </location>
</feature>
<organism>
    <name type="scientific">Staphylococcus aureus (strain bovine RF122 / ET3-1)</name>
    <dbReference type="NCBI Taxonomy" id="273036"/>
    <lineage>
        <taxon>Bacteria</taxon>
        <taxon>Bacillati</taxon>
        <taxon>Bacillota</taxon>
        <taxon>Bacilli</taxon>
        <taxon>Bacillales</taxon>
        <taxon>Staphylococcaceae</taxon>
        <taxon>Staphylococcus</taxon>
    </lineage>
</organism>
<evidence type="ECO:0000255" key="1">
    <source>
        <dbReference type="HAMAP-Rule" id="MF_00068"/>
    </source>
</evidence>
<gene>
    <name evidence="1" type="primary">murQ</name>
    <name type="ordered locus">SAB0131</name>
</gene>
<dbReference type="EC" id="4.2.1.126" evidence="1"/>
<dbReference type="EMBL" id="AJ938182">
    <property type="protein sequence ID" value="CAI79819.1"/>
    <property type="molecule type" value="Genomic_DNA"/>
</dbReference>
<dbReference type="SMR" id="Q2YUY9"/>
<dbReference type="KEGG" id="sab:SAB0131"/>
<dbReference type="HOGENOM" id="CLU_049049_1_1_9"/>
<dbReference type="UniPathway" id="UPA00342"/>
<dbReference type="GO" id="GO:0097367">
    <property type="term" value="F:carbohydrate derivative binding"/>
    <property type="evidence" value="ECO:0007669"/>
    <property type="project" value="InterPro"/>
</dbReference>
<dbReference type="GO" id="GO:0016835">
    <property type="term" value="F:carbon-oxygen lyase activity"/>
    <property type="evidence" value="ECO:0007669"/>
    <property type="project" value="UniProtKB-UniRule"/>
</dbReference>
<dbReference type="GO" id="GO:0016803">
    <property type="term" value="F:ether hydrolase activity"/>
    <property type="evidence" value="ECO:0007669"/>
    <property type="project" value="TreeGrafter"/>
</dbReference>
<dbReference type="GO" id="GO:0046348">
    <property type="term" value="P:amino sugar catabolic process"/>
    <property type="evidence" value="ECO:0007669"/>
    <property type="project" value="InterPro"/>
</dbReference>
<dbReference type="GO" id="GO:0097173">
    <property type="term" value="P:N-acetylmuramic acid catabolic process"/>
    <property type="evidence" value="ECO:0007669"/>
    <property type="project" value="UniProtKB-UniPathway"/>
</dbReference>
<dbReference type="GO" id="GO:0009254">
    <property type="term" value="P:peptidoglycan turnover"/>
    <property type="evidence" value="ECO:0007669"/>
    <property type="project" value="TreeGrafter"/>
</dbReference>
<dbReference type="CDD" id="cd05007">
    <property type="entry name" value="SIS_Etherase"/>
    <property type="match status" value="1"/>
</dbReference>
<dbReference type="FunFam" id="1.10.8.1080:FF:000001">
    <property type="entry name" value="N-acetylmuramic acid 6-phosphate etherase"/>
    <property type="match status" value="1"/>
</dbReference>
<dbReference type="FunFam" id="3.40.50.10490:FF:000014">
    <property type="entry name" value="N-acetylmuramic acid 6-phosphate etherase"/>
    <property type="match status" value="1"/>
</dbReference>
<dbReference type="Gene3D" id="1.10.8.1080">
    <property type="match status" value="1"/>
</dbReference>
<dbReference type="Gene3D" id="3.40.50.10490">
    <property type="entry name" value="Glucose-6-phosphate isomerase like protein, domain 1"/>
    <property type="match status" value="1"/>
</dbReference>
<dbReference type="HAMAP" id="MF_00068">
    <property type="entry name" value="MurQ"/>
    <property type="match status" value="1"/>
</dbReference>
<dbReference type="InterPro" id="IPR005488">
    <property type="entry name" value="Etherase_MurQ"/>
</dbReference>
<dbReference type="InterPro" id="IPR005486">
    <property type="entry name" value="Glucokinase_regulatory_CS"/>
</dbReference>
<dbReference type="InterPro" id="IPR040190">
    <property type="entry name" value="MURQ/GCKR"/>
</dbReference>
<dbReference type="InterPro" id="IPR000408">
    <property type="entry name" value="Reg_chr_condens"/>
</dbReference>
<dbReference type="InterPro" id="IPR001347">
    <property type="entry name" value="SIS_dom"/>
</dbReference>
<dbReference type="InterPro" id="IPR046348">
    <property type="entry name" value="SIS_dom_sf"/>
</dbReference>
<dbReference type="NCBIfam" id="TIGR00274">
    <property type="entry name" value="N-acetylmuramic acid 6-phosphate etherase"/>
    <property type="match status" value="1"/>
</dbReference>
<dbReference type="NCBIfam" id="NF003915">
    <property type="entry name" value="PRK05441.1"/>
    <property type="match status" value="1"/>
</dbReference>
<dbReference type="NCBIfam" id="NF009222">
    <property type="entry name" value="PRK12570.1"/>
    <property type="match status" value="1"/>
</dbReference>
<dbReference type="PANTHER" id="PTHR10088">
    <property type="entry name" value="GLUCOKINASE REGULATORY PROTEIN"/>
    <property type="match status" value="1"/>
</dbReference>
<dbReference type="PANTHER" id="PTHR10088:SF4">
    <property type="entry name" value="GLUCOKINASE REGULATORY PROTEIN"/>
    <property type="match status" value="1"/>
</dbReference>
<dbReference type="Pfam" id="PF22645">
    <property type="entry name" value="GKRP_SIS_N"/>
    <property type="match status" value="1"/>
</dbReference>
<dbReference type="SUPFAM" id="SSF53697">
    <property type="entry name" value="SIS domain"/>
    <property type="match status" value="1"/>
</dbReference>
<dbReference type="PROSITE" id="PS01272">
    <property type="entry name" value="GCKR"/>
    <property type="match status" value="1"/>
</dbReference>
<dbReference type="PROSITE" id="PS51464">
    <property type="entry name" value="SIS"/>
    <property type="match status" value="1"/>
</dbReference>